<feature type="chain" id="PRO_0000199494" description="MADS-box protein defh21">
    <location>
        <begin position="1"/>
        <end position="247"/>
    </location>
</feature>
<feature type="domain" description="MADS-box" evidence="1">
    <location>
        <begin position="1"/>
        <end position="61"/>
    </location>
</feature>
<feature type="domain" description="K-box" evidence="2">
    <location>
        <begin position="91"/>
        <end position="183"/>
    </location>
</feature>
<protein>
    <recommendedName>
        <fullName>MADS-box protein defh21</fullName>
    </recommendedName>
    <alternativeName>
        <fullName>DEFICIENS homolog 21</fullName>
    </alternativeName>
</protein>
<gene>
    <name type="primary">DEFH21</name>
</gene>
<name>DEF21_ANTMA</name>
<organism>
    <name type="scientific">Antirrhinum majus</name>
    <name type="common">Garden snapdragon</name>
    <dbReference type="NCBI Taxonomy" id="4151"/>
    <lineage>
        <taxon>Eukaryota</taxon>
        <taxon>Viridiplantae</taxon>
        <taxon>Streptophyta</taxon>
        <taxon>Embryophyta</taxon>
        <taxon>Tracheophyta</taxon>
        <taxon>Spermatophyta</taxon>
        <taxon>Magnoliopsida</taxon>
        <taxon>eudicotyledons</taxon>
        <taxon>Gunneridae</taxon>
        <taxon>Pentapetalae</taxon>
        <taxon>asterids</taxon>
        <taxon>lamiids</taxon>
        <taxon>Lamiales</taxon>
        <taxon>Plantaginaceae</taxon>
        <taxon>Antirrhineae</taxon>
        <taxon>Antirrhinum</taxon>
    </lineage>
</organism>
<dbReference type="EMBL" id="AJ307056">
    <property type="protein sequence ID" value="CAC85225.1"/>
    <property type="molecule type" value="mRNA"/>
</dbReference>
<dbReference type="SMR" id="Q8RVL4"/>
<dbReference type="GO" id="GO:0005634">
    <property type="term" value="C:nucleus"/>
    <property type="evidence" value="ECO:0007669"/>
    <property type="project" value="UniProtKB-SubCell"/>
</dbReference>
<dbReference type="GO" id="GO:0003700">
    <property type="term" value="F:DNA-binding transcription factor activity"/>
    <property type="evidence" value="ECO:0007669"/>
    <property type="project" value="InterPro"/>
</dbReference>
<dbReference type="GO" id="GO:0046983">
    <property type="term" value="F:protein dimerization activity"/>
    <property type="evidence" value="ECO:0007669"/>
    <property type="project" value="InterPro"/>
</dbReference>
<dbReference type="GO" id="GO:0000977">
    <property type="term" value="F:RNA polymerase II transcription regulatory region sequence-specific DNA binding"/>
    <property type="evidence" value="ECO:0007669"/>
    <property type="project" value="InterPro"/>
</dbReference>
<dbReference type="GO" id="GO:0045944">
    <property type="term" value="P:positive regulation of transcription by RNA polymerase II"/>
    <property type="evidence" value="ECO:0007669"/>
    <property type="project" value="InterPro"/>
</dbReference>
<dbReference type="CDD" id="cd00265">
    <property type="entry name" value="MADS_MEF2_like"/>
    <property type="match status" value="1"/>
</dbReference>
<dbReference type="Gene3D" id="3.40.1810.10">
    <property type="entry name" value="Transcription factor, MADS-box"/>
    <property type="match status" value="1"/>
</dbReference>
<dbReference type="InterPro" id="IPR050142">
    <property type="entry name" value="MADS-box/MEF2_TF"/>
</dbReference>
<dbReference type="InterPro" id="IPR033896">
    <property type="entry name" value="MEF2-like_N"/>
</dbReference>
<dbReference type="InterPro" id="IPR002487">
    <property type="entry name" value="TF_Kbox"/>
</dbReference>
<dbReference type="InterPro" id="IPR002100">
    <property type="entry name" value="TF_MADSbox"/>
</dbReference>
<dbReference type="InterPro" id="IPR036879">
    <property type="entry name" value="TF_MADSbox_sf"/>
</dbReference>
<dbReference type="PANTHER" id="PTHR48019">
    <property type="entry name" value="SERUM RESPONSE FACTOR HOMOLOG"/>
    <property type="match status" value="1"/>
</dbReference>
<dbReference type="Pfam" id="PF01486">
    <property type="entry name" value="K-box"/>
    <property type="match status" value="1"/>
</dbReference>
<dbReference type="Pfam" id="PF00319">
    <property type="entry name" value="SRF-TF"/>
    <property type="match status" value="1"/>
</dbReference>
<dbReference type="PRINTS" id="PR00404">
    <property type="entry name" value="MADSDOMAIN"/>
</dbReference>
<dbReference type="SMART" id="SM00432">
    <property type="entry name" value="MADS"/>
    <property type="match status" value="1"/>
</dbReference>
<dbReference type="SUPFAM" id="SSF55455">
    <property type="entry name" value="SRF-like"/>
    <property type="match status" value="1"/>
</dbReference>
<dbReference type="PROSITE" id="PS51297">
    <property type="entry name" value="K_BOX"/>
    <property type="match status" value="1"/>
</dbReference>
<dbReference type="PROSITE" id="PS00350">
    <property type="entry name" value="MADS_BOX_1"/>
    <property type="match status" value="1"/>
</dbReference>
<dbReference type="PROSITE" id="PS50066">
    <property type="entry name" value="MADS_BOX_2"/>
    <property type="match status" value="1"/>
</dbReference>
<keyword id="KW-0238">DNA-binding</keyword>
<keyword id="KW-0539">Nucleus</keyword>
<keyword id="KW-0804">Transcription</keyword>
<keyword id="KW-0805">Transcription regulation</keyword>
<accession>Q8RVL4</accession>
<proteinExistence type="evidence at transcript level"/>
<comment type="function">
    <text>Probable transcription factor.</text>
</comment>
<comment type="subcellular location">
    <subcellularLocation>
        <location evidence="1">Nucleus</location>
    </subcellularLocation>
</comment>
<comment type="tissue specificity">
    <text>Expressed exclusively in a few inner cell layers of the inner integuments of the ovules.</text>
</comment>
<evidence type="ECO:0000255" key="1">
    <source>
        <dbReference type="PROSITE-ProRule" id="PRU00251"/>
    </source>
</evidence>
<evidence type="ECO:0000255" key="2">
    <source>
        <dbReference type="PROSITE-ProRule" id="PRU00629"/>
    </source>
</evidence>
<reference key="1">
    <citation type="journal article" date="2002" name="Mol. Genet. Genomics">
        <title>A novel MADS-box gene subfamily with sistergroup relationship to class B floral homeotic genes.</title>
        <authorList>
            <person name="Becker A."/>
            <person name="Kaufmann K."/>
            <person name="Freialdenhoven A."/>
            <person name="Vincent C."/>
            <person name="Li M.-A."/>
            <person name="Saedler H."/>
            <person name="Theissen G."/>
        </authorList>
    </citation>
    <scope>NUCLEOTIDE SEQUENCE [MRNA]</scope>
    <source>
        <tissue>Flower bud</tissue>
    </source>
</reference>
<sequence length="247" mass="29052">MGRGKIEVKRIENNTSRQVTFSKRRSGLMKKTHELSVLCDAQIGLIVFSTKGKLTEYCTPPFSMKQIIDRYVKAKGILPEMENRAGPHADNDQVIKELTRMKEETLNLQLNLQRYKGDDLSTVRFEELTELEKLLDQSLNKVRARKLELLHEQMENLKRTEFMLEKENQEMYHWLMSNQIQRQAEVEHHHQQQVMTELKLVEQQQPLMNEFPFFGEDLHLGTLPLLDTHSYRLQPTQPNLQDPAQIN</sequence>